<keyword id="KW-0963">Cytoplasm</keyword>
<keyword id="KW-0479">Metal-binding</keyword>
<keyword id="KW-0862">Zinc</keyword>
<dbReference type="EMBL" id="BA000031">
    <property type="protein sequence ID" value="BAC60871.1"/>
    <property type="molecule type" value="Genomic_DNA"/>
</dbReference>
<dbReference type="RefSeq" id="NP_798987.1">
    <property type="nucleotide sequence ID" value="NC_004603.1"/>
</dbReference>
<dbReference type="RefSeq" id="WP_005461721.1">
    <property type="nucleotide sequence ID" value="NC_004603.1"/>
</dbReference>
<dbReference type="GeneID" id="1190132"/>
<dbReference type="KEGG" id="vpa:VP2608"/>
<dbReference type="PATRIC" id="fig|223926.6.peg.2504"/>
<dbReference type="eggNOG" id="COG3091">
    <property type="taxonomic scope" value="Bacteria"/>
</dbReference>
<dbReference type="HOGENOM" id="CLU_113336_0_1_6"/>
<dbReference type="Proteomes" id="UP000002493">
    <property type="component" value="Chromosome 1"/>
</dbReference>
<dbReference type="GO" id="GO:0005737">
    <property type="term" value="C:cytoplasm"/>
    <property type="evidence" value="ECO:0007669"/>
    <property type="project" value="UniProtKB-SubCell"/>
</dbReference>
<dbReference type="GO" id="GO:0008270">
    <property type="term" value="F:zinc ion binding"/>
    <property type="evidence" value="ECO:0007669"/>
    <property type="project" value="UniProtKB-UniRule"/>
</dbReference>
<dbReference type="GO" id="GO:0006950">
    <property type="term" value="P:response to stress"/>
    <property type="evidence" value="ECO:0007669"/>
    <property type="project" value="UniProtKB-ARBA"/>
</dbReference>
<dbReference type="HAMAP" id="MF_00746">
    <property type="entry name" value="SprT"/>
    <property type="match status" value="1"/>
</dbReference>
<dbReference type="InterPro" id="IPR006640">
    <property type="entry name" value="SprT-like_domain"/>
</dbReference>
<dbReference type="InterPro" id="IPR035240">
    <property type="entry name" value="SprT_Zn_ribbon"/>
</dbReference>
<dbReference type="InterPro" id="IPR023483">
    <property type="entry name" value="Uncharacterised_SprT"/>
</dbReference>
<dbReference type="NCBIfam" id="NF003421">
    <property type="entry name" value="PRK04860.1"/>
    <property type="match status" value="1"/>
</dbReference>
<dbReference type="PANTHER" id="PTHR38773">
    <property type="entry name" value="PROTEIN SPRT"/>
    <property type="match status" value="1"/>
</dbReference>
<dbReference type="PANTHER" id="PTHR38773:SF1">
    <property type="entry name" value="PROTEIN SPRT"/>
    <property type="match status" value="1"/>
</dbReference>
<dbReference type="Pfam" id="PF10263">
    <property type="entry name" value="SprT-like"/>
    <property type="match status" value="1"/>
</dbReference>
<dbReference type="Pfam" id="PF17283">
    <property type="entry name" value="Zn_ribbon_SprT"/>
    <property type="match status" value="1"/>
</dbReference>
<dbReference type="SMART" id="SM00731">
    <property type="entry name" value="SprT"/>
    <property type="match status" value="1"/>
</dbReference>
<dbReference type="PROSITE" id="PS00142">
    <property type="entry name" value="ZINC_PROTEASE"/>
    <property type="match status" value="1"/>
</dbReference>
<organism>
    <name type="scientific">Vibrio parahaemolyticus serotype O3:K6 (strain RIMD 2210633)</name>
    <dbReference type="NCBI Taxonomy" id="223926"/>
    <lineage>
        <taxon>Bacteria</taxon>
        <taxon>Pseudomonadati</taxon>
        <taxon>Pseudomonadota</taxon>
        <taxon>Gammaproteobacteria</taxon>
        <taxon>Vibrionales</taxon>
        <taxon>Vibrionaceae</taxon>
        <taxon>Vibrio</taxon>
    </lineage>
</organism>
<evidence type="ECO:0000255" key="1"/>
<evidence type="ECO:0000305" key="2"/>
<accession>Q87LK4</accession>
<comment type="cofactor">
    <cofactor evidence="2">
        <name>Zn(2+)</name>
        <dbReference type="ChEBI" id="CHEBI:29105"/>
    </cofactor>
    <text evidence="2">Binds 1 zinc ion.</text>
</comment>
<comment type="subcellular location">
    <subcellularLocation>
        <location evidence="2">Cytoplasm</location>
    </subcellularLocation>
</comment>
<comment type="similarity">
    <text evidence="2">Belongs to the SprT family.</text>
</comment>
<feature type="chain" id="PRO_0000213281" description="Protein SprT">
    <location>
        <begin position="1"/>
        <end position="165"/>
    </location>
</feature>
<feature type="domain" description="SprT-like">
    <location>
        <begin position="20"/>
        <end position="158"/>
    </location>
</feature>
<feature type="active site" evidence="1">
    <location>
        <position position="74"/>
    </location>
</feature>
<feature type="binding site" evidence="1">
    <location>
        <position position="73"/>
    </location>
    <ligand>
        <name>Zn(2+)</name>
        <dbReference type="ChEBI" id="CHEBI:29105"/>
    </ligand>
</feature>
<feature type="binding site" evidence="1">
    <location>
        <position position="77"/>
    </location>
    <ligand>
        <name>Zn(2+)</name>
        <dbReference type="ChEBI" id="CHEBI:29105"/>
    </ligand>
</feature>
<sequence length="165" mass="18980">MDIELSYKAKQVMVDCISLAQQAFKRSFPIPSITFNVRGKAAGKAYLQLNQIRLNPILFRENPQAFLEEVIPHEVAHLITYQVYGRVRPHGKEWRGVMESVFGISANTTHRFEVTSVQGKTFEYRCGCMTYPLSIRRHNKVLRKEATYSCQKCHQPLNFTGVQLS</sequence>
<protein>
    <recommendedName>
        <fullName>Protein SprT</fullName>
    </recommendedName>
</protein>
<reference key="1">
    <citation type="journal article" date="2003" name="Lancet">
        <title>Genome sequence of Vibrio parahaemolyticus: a pathogenic mechanism distinct from that of V. cholerae.</title>
        <authorList>
            <person name="Makino K."/>
            <person name="Oshima K."/>
            <person name="Kurokawa K."/>
            <person name="Yokoyama K."/>
            <person name="Uda T."/>
            <person name="Tagomori K."/>
            <person name="Iijima Y."/>
            <person name="Najima M."/>
            <person name="Nakano M."/>
            <person name="Yamashita A."/>
            <person name="Kubota Y."/>
            <person name="Kimura S."/>
            <person name="Yasunaga T."/>
            <person name="Honda T."/>
            <person name="Shinagawa H."/>
            <person name="Hattori M."/>
            <person name="Iida T."/>
        </authorList>
    </citation>
    <scope>NUCLEOTIDE SEQUENCE [LARGE SCALE GENOMIC DNA]</scope>
    <source>
        <strain>RIMD 2210633</strain>
    </source>
</reference>
<proteinExistence type="inferred from homology"/>
<name>SPRT_VIBPA</name>
<gene>
    <name type="primary">sprT</name>
    <name type="ordered locus">VP2608</name>
</gene>